<keyword id="KW-0378">Hydrolase</keyword>
<keyword id="KW-0479">Metal-binding</keyword>
<keyword id="KW-0482">Metalloprotease</keyword>
<keyword id="KW-0645">Protease</keyword>
<keyword id="KW-0862">Zinc</keyword>
<sequence>MAIKDWPEGEGPRDKLLVKGAAHLSDAELLAVLLRNGLSGLNAVDLARSLIQEFGGLRSLLCAPKHQVCRLPGVGPVKYAQLQAAAELARRVAQENLQRGQVLTNPDLTRDYLMRQLADRSYEVFAILLLDSQHRVIQFVELFRGTIDSASVYPREVVSLVLEKKAAAVIVCHNHPSGIAEPSQADRRITERLKNALATIDVSLLDHMVVGDREIVSFAERGWIN</sequence>
<dbReference type="EMBL" id="CP000446">
    <property type="protein sequence ID" value="ABI40661.1"/>
    <property type="molecule type" value="Genomic_DNA"/>
</dbReference>
<dbReference type="RefSeq" id="WP_011624322.1">
    <property type="nucleotide sequence ID" value="NC_008321.1"/>
</dbReference>
<dbReference type="SMR" id="Q0HE56"/>
<dbReference type="KEGG" id="she:Shewmr4_3597"/>
<dbReference type="HOGENOM" id="CLU_073529_0_1_6"/>
<dbReference type="GO" id="GO:0046872">
    <property type="term" value="F:metal ion binding"/>
    <property type="evidence" value="ECO:0007669"/>
    <property type="project" value="UniProtKB-KW"/>
</dbReference>
<dbReference type="GO" id="GO:0008237">
    <property type="term" value="F:metallopeptidase activity"/>
    <property type="evidence" value="ECO:0007669"/>
    <property type="project" value="UniProtKB-KW"/>
</dbReference>
<dbReference type="GO" id="GO:0006508">
    <property type="term" value="P:proteolysis"/>
    <property type="evidence" value="ECO:0007669"/>
    <property type="project" value="UniProtKB-KW"/>
</dbReference>
<dbReference type="CDD" id="cd08071">
    <property type="entry name" value="MPN_DUF2466"/>
    <property type="match status" value="1"/>
</dbReference>
<dbReference type="FunFam" id="3.40.140.10:FF:000032">
    <property type="entry name" value="DNA repair protein RadC"/>
    <property type="match status" value="1"/>
</dbReference>
<dbReference type="Gene3D" id="3.40.140.10">
    <property type="entry name" value="Cytidine Deaminase, domain 2"/>
    <property type="match status" value="1"/>
</dbReference>
<dbReference type="InterPro" id="IPR037518">
    <property type="entry name" value="MPN"/>
</dbReference>
<dbReference type="InterPro" id="IPR025657">
    <property type="entry name" value="RadC_JAB"/>
</dbReference>
<dbReference type="InterPro" id="IPR010994">
    <property type="entry name" value="RuvA_2-like"/>
</dbReference>
<dbReference type="InterPro" id="IPR001405">
    <property type="entry name" value="UPF0758"/>
</dbReference>
<dbReference type="InterPro" id="IPR020891">
    <property type="entry name" value="UPF0758_CS"/>
</dbReference>
<dbReference type="InterPro" id="IPR046778">
    <property type="entry name" value="UPF0758_N"/>
</dbReference>
<dbReference type="NCBIfam" id="NF000642">
    <property type="entry name" value="PRK00024.1"/>
    <property type="match status" value="1"/>
</dbReference>
<dbReference type="NCBIfam" id="TIGR00608">
    <property type="entry name" value="radc"/>
    <property type="match status" value="1"/>
</dbReference>
<dbReference type="PANTHER" id="PTHR30471">
    <property type="entry name" value="DNA REPAIR PROTEIN RADC"/>
    <property type="match status" value="1"/>
</dbReference>
<dbReference type="PANTHER" id="PTHR30471:SF3">
    <property type="entry name" value="UPF0758 PROTEIN YEES-RELATED"/>
    <property type="match status" value="1"/>
</dbReference>
<dbReference type="Pfam" id="PF04002">
    <property type="entry name" value="RadC"/>
    <property type="match status" value="1"/>
</dbReference>
<dbReference type="Pfam" id="PF20582">
    <property type="entry name" value="UPF0758_N"/>
    <property type="match status" value="1"/>
</dbReference>
<dbReference type="SUPFAM" id="SSF102712">
    <property type="entry name" value="JAB1/MPN domain"/>
    <property type="match status" value="1"/>
</dbReference>
<dbReference type="SUPFAM" id="SSF47781">
    <property type="entry name" value="RuvA domain 2-like"/>
    <property type="match status" value="1"/>
</dbReference>
<dbReference type="PROSITE" id="PS50249">
    <property type="entry name" value="MPN"/>
    <property type="match status" value="1"/>
</dbReference>
<dbReference type="PROSITE" id="PS01302">
    <property type="entry name" value="UPF0758"/>
    <property type="match status" value="1"/>
</dbReference>
<feature type="chain" id="PRO_1000001696" description="UPF0758 protein Shewmr4_3597">
    <location>
        <begin position="1"/>
        <end position="225"/>
    </location>
</feature>
<feature type="domain" description="MPN" evidence="1">
    <location>
        <begin position="102"/>
        <end position="224"/>
    </location>
</feature>
<feature type="short sequence motif" description="JAMM motif" evidence="1">
    <location>
        <begin position="173"/>
        <end position="186"/>
    </location>
</feature>
<feature type="binding site" evidence="1">
    <location>
        <position position="173"/>
    </location>
    <ligand>
        <name>Zn(2+)</name>
        <dbReference type="ChEBI" id="CHEBI:29105"/>
        <note>catalytic</note>
    </ligand>
</feature>
<feature type="binding site" evidence="1">
    <location>
        <position position="175"/>
    </location>
    <ligand>
        <name>Zn(2+)</name>
        <dbReference type="ChEBI" id="CHEBI:29105"/>
        <note>catalytic</note>
    </ligand>
</feature>
<feature type="binding site" evidence="1">
    <location>
        <position position="186"/>
    </location>
    <ligand>
        <name>Zn(2+)</name>
        <dbReference type="ChEBI" id="CHEBI:29105"/>
        <note>catalytic</note>
    </ligand>
</feature>
<comment type="similarity">
    <text evidence="2">Belongs to the UPF0758 family.</text>
</comment>
<gene>
    <name type="ordered locus">Shewmr4_3597</name>
</gene>
<accession>Q0HE56</accession>
<proteinExistence type="inferred from homology"/>
<evidence type="ECO:0000255" key="1">
    <source>
        <dbReference type="PROSITE-ProRule" id="PRU01182"/>
    </source>
</evidence>
<evidence type="ECO:0000305" key="2"/>
<name>Y3597_SHESM</name>
<protein>
    <recommendedName>
        <fullName>UPF0758 protein Shewmr4_3597</fullName>
    </recommendedName>
</protein>
<reference key="1">
    <citation type="submission" date="2006-08" db="EMBL/GenBank/DDBJ databases">
        <title>Complete sequence of Shewanella sp. MR-4.</title>
        <authorList>
            <consortium name="US DOE Joint Genome Institute"/>
            <person name="Copeland A."/>
            <person name="Lucas S."/>
            <person name="Lapidus A."/>
            <person name="Barry K."/>
            <person name="Detter J.C."/>
            <person name="Glavina del Rio T."/>
            <person name="Hammon N."/>
            <person name="Israni S."/>
            <person name="Dalin E."/>
            <person name="Tice H."/>
            <person name="Pitluck S."/>
            <person name="Kiss H."/>
            <person name="Brettin T."/>
            <person name="Bruce D."/>
            <person name="Han C."/>
            <person name="Tapia R."/>
            <person name="Gilna P."/>
            <person name="Schmutz J."/>
            <person name="Larimer F."/>
            <person name="Land M."/>
            <person name="Hauser L."/>
            <person name="Kyrpides N."/>
            <person name="Mikhailova N."/>
            <person name="Nealson K."/>
            <person name="Konstantinidis K."/>
            <person name="Klappenbach J."/>
            <person name="Tiedje J."/>
            <person name="Richardson P."/>
        </authorList>
    </citation>
    <scope>NUCLEOTIDE SEQUENCE [LARGE SCALE GENOMIC DNA]</scope>
    <source>
        <strain>MR-4</strain>
    </source>
</reference>
<organism>
    <name type="scientific">Shewanella sp. (strain MR-4)</name>
    <dbReference type="NCBI Taxonomy" id="60480"/>
    <lineage>
        <taxon>Bacteria</taxon>
        <taxon>Pseudomonadati</taxon>
        <taxon>Pseudomonadota</taxon>
        <taxon>Gammaproteobacteria</taxon>
        <taxon>Alteromonadales</taxon>
        <taxon>Shewanellaceae</taxon>
        <taxon>Shewanella</taxon>
    </lineage>
</organism>